<protein>
    <recommendedName>
        <fullName evidence="1">ATP synthase subunit b</fullName>
    </recommendedName>
    <alternativeName>
        <fullName evidence="1">ATP synthase F(0) sector subunit b</fullName>
    </alternativeName>
    <alternativeName>
        <fullName evidence="1">ATPase subunit I</fullName>
    </alternativeName>
    <alternativeName>
        <fullName evidence="1">F-type ATPase subunit b</fullName>
        <shortName evidence="1">F-ATPase subunit b</shortName>
    </alternativeName>
</protein>
<gene>
    <name evidence="1" type="primary">atpF</name>
    <name type="ordered locus">BMA10247_3011</name>
</gene>
<accession>A3MQJ5</accession>
<keyword id="KW-0066">ATP synthesis</keyword>
<keyword id="KW-0997">Cell inner membrane</keyword>
<keyword id="KW-1003">Cell membrane</keyword>
<keyword id="KW-0138">CF(0)</keyword>
<keyword id="KW-0375">Hydrogen ion transport</keyword>
<keyword id="KW-0406">Ion transport</keyword>
<keyword id="KW-0472">Membrane</keyword>
<keyword id="KW-0812">Transmembrane</keyword>
<keyword id="KW-1133">Transmembrane helix</keyword>
<keyword id="KW-0813">Transport</keyword>
<reference key="1">
    <citation type="journal article" date="2010" name="Genome Biol. Evol.">
        <title>Continuing evolution of Burkholderia mallei through genome reduction and large-scale rearrangements.</title>
        <authorList>
            <person name="Losada L."/>
            <person name="Ronning C.M."/>
            <person name="DeShazer D."/>
            <person name="Woods D."/>
            <person name="Fedorova N."/>
            <person name="Kim H.S."/>
            <person name="Shabalina S.A."/>
            <person name="Pearson T.R."/>
            <person name="Brinkac L."/>
            <person name="Tan P."/>
            <person name="Nandi T."/>
            <person name="Crabtree J."/>
            <person name="Badger J."/>
            <person name="Beckstrom-Sternberg S."/>
            <person name="Saqib M."/>
            <person name="Schutzer S.E."/>
            <person name="Keim P."/>
            <person name="Nierman W.C."/>
        </authorList>
    </citation>
    <scope>NUCLEOTIDE SEQUENCE [LARGE SCALE GENOMIC DNA]</scope>
    <source>
        <strain>NCTC 10247</strain>
    </source>
</reference>
<name>ATPF_BURM7</name>
<evidence type="ECO:0000255" key="1">
    <source>
        <dbReference type="HAMAP-Rule" id="MF_01398"/>
    </source>
</evidence>
<sequence>MNLNATLFAQMVVFLVLAWFTMKFVWPPLINALDERSKKIADGLAAAEKGKAELEAAHKRVDQELAQARNDGQQRIADAEKRALAVADEIKTNAQAEAARIIAQAKAEAEQQIVKARETLRGEVAALAVKGAEQILKREVDQTAHAELLNQLKAEL</sequence>
<dbReference type="EMBL" id="CP000548">
    <property type="protein sequence ID" value="ABO05410.1"/>
    <property type="molecule type" value="Genomic_DNA"/>
</dbReference>
<dbReference type="RefSeq" id="WP_004185283.1">
    <property type="nucleotide sequence ID" value="NZ_CP007802.1"/>
</dbReference>
<dbReference type="SMR" id="A3MQJ5"/>
<dbReference type="KEGG" id="bmaz:BM44_339"/>
<dbReference type="KEGG" id="bmn:BMA10247_3011"/>
<dbReference type="PATRIC" id="fig|320389.8.peg.374"/>
<dbReference type="GO" id="GO:0005886">
    <property type="term" value="C:plasma membrane"/>
    <property type="evidence" value="ECO:0007669"/>
    <property type="project" value="UniProtKB-SubCell"/>
</dbReference>
<dbReference type="GO" id="GO:0045259">
    <property type="term" value="C:proton-transporting ATP synthase complex"/>
    <property type="evidence" value="ECO:0007669"/>
    <property type="project" value="UniProtKB-KW"/>
</dbReference>
<dbReference type="GO" id="GO:0046933">
    <property type="term" value="F:proton-transporting ATP synthase activity, rotational mechanism"/>
    <property type="evidence" value="ECO:0007669"/>
    <property type="project" value="UniProtKB-UniRule"/>
</dbReference>
<dbReference type="GO" id="GO:0046961">
    <property type="term" value="F:proton-transporting ATPase activity, rotational mechanism"/>
    <property type="evidence" value="ECO:0007669"/>
    <property type="project" value="TreeGrafter"/>
</dbReference>
<dbReference type="CDD" id="cd06503">
    <property type="entry name" value="ATP-synt_Fo_b"/>
    <property type="match status" value="1"/>
</dbReference>
<dbReference type="Gene3D" id="6.10.250.1580">
    <property type="match status" value="1"/>
</dbReference>
<dbReference type="HAMAP" id="MF_01398">
    <property type="entry name" value="ATP_synth_b_bprime"/>
    <property type="match status" value="1"/>
</dbReference>
<dbReference type="InterPro" id="IPR028987">
    <property type="entry name" value="ATP_synth_B-like_membr_sf"/>
</dbReference>
<dbReference type="InterPro" id="IPR002146">
    <property type="entry name" value="ATP_synth_b/b'su_bac/chlpt"/>
</dbReference>
<dbReference type="InterPro" id="IPR005864">
    <property type="entry name" value="ATP_synth_F0_bsu_bac"/>
</dbReference>
<dbReference type="InterPro" id="IPR050059">
    <property type="entry name" value="ATP_synthase_B_chain"/>
</dbReference>
<dbReference type="NCBIfam" id="TIGR01144">
    <property type="entry name" value="ATP_synt_b"/>
    <property type="match status" value="1"/>
</dbReference>
<dbReference type="NCBIfam" id="NF004411">
    <property type="entry name" value="PRK05759.1-2"/>
    <property type="match status" value="1"/>
</dbReference>
<dbReference type="PANTHER" id="PTHR33445:SF1">
    <property type="entry name" value="ATP SYNTHASE SUBUNIT B"/>
    <property type="match status" value="1"/>
</dbReference>
<dbReference type="PANTHER" id="PTHR33445">
    <property type="entry name" value="ATP SYNTHASE SUBUNIT B', CHLOROPLASTIC"/>
    <property type="match status" value="1"/>
</dbReference>
<dbReference type="Pfam" id="PF00430">
    <property type="entry name" value="ATP-synt_B"/>
    <property type="match status" value="1"/>
</dbReference>
<dbReference type="SUPFAM" id="SSF81573">
    <property type="entry name" value="F1F0 ATP synthase subunit B, membrane domain"/>
    <property type="match status" value="1"/>
</dbReference>
<feature type="chain" id="PRO_0000368386" description="ATP synthase subunit b">
    <location>
        <begin position="1"/>
        <end position="156"/>
    </location>
</feature>
<feature type="transmembrane region" description="Helical" evidence="1">
    <location>
        <begin position="7"/>
        <end position="29"/>
    </location>
</feature>
<proteinExistence type="inferred from homology"/>
<comment type="function">
    <text evidence="1">F(1)F(0) ATP synthase produces ATP from ADP in the presence of a proton or sodium gradient. F-type ATPases consist of two structural domains, F(1) containing the extramembraneous catalytic core and F(0) containing the membrane proton channel, linked together by a central stalk and a peripheral stalk. During catalysis, ATP synthesis in the catalytic domain of F(1) is coupled via a rotary mechanism of the central stalk subunits to proton translocation.</text>
</comment>
<comment type="function">
    <text evidence="1">Component of the F(0) channel, it forms part of the peripheral stalk, linking F(1) to F(0).</text>
</comment>
<comment type="subunit">
    <text evidence="1">F-type ATPases have 2 components, F(1) - the catalytic core - and F(0) - the membrane proton channel. F(1) has five subunits: alpha(3), beta(3), gamma(1), delta(1), epsilon(1). F(0) has three main subunits: a(1), b(2) and c(10-14). The alpha and beta chains form an alternating ring which encloses part of the gamma chain. F(1) is attached to F(0) by a central stalk formed by the gamma and epsilon chains, while a peripheral stalk is formed by the delta and b chains.</text>
</comment>
<comment type="subcellular location">
    <subcellularLocation>
        <location evidence="1">Cell inner membrane</location>
        <topology evidence="1">Single-pass membrane protein</topology>
    </subcellularLocation>
</comment>
<comment type="similarity">
    <text evidence="1">Belongs to the ATPase B chain family.</text>
</comment>
<organism>
    <name type="scientific">Burkholderia mallei (strain NCTC 10247)</name>
    <dbReference type="NCBI Taxonomy" id="320389"/>
    <lineage>
        <taxon>Bacteria</taxon>
        <taxon>Pseudomonadati</taxon>
        <taxon>Pseudomonadota</taxon>
        <taxon>Betaproteobacteria</taxon>
        <taxon>Burkholderiales</taxon>
        <taxon>Burkholderiaceae</taxon>
        <taxon>Burkholderia</taxon>
        <taxon>pseudomallei group</taxon>
    </lineage>
</organism>